<proteinExistence type="inferred from homology"/>
<sequence length="31" mass="3373">MPTLTSYFGFLLAALTITSALFIGLSKIRLI</sequence>
<dbReference type="EMBL" id="AP009366">
    <property type="protein sequence ID" value="BAF49788.1"/>
    <property type="molecule type" value="Genomic_DNA"/>
</dbReference>
<dbReference type="RefSeq" id="YP_001122964.1">
    <property type="nucleotide sequence ID" value="NC_009265.1"/>
</dbReference>
<dbReference type="SMR" id="A4QJD3"/>
<dbReference type="GeneID" id="4968597"/>
<dbReference type="GO" id="GO:0009535">
    <property type="term" value="C:chloroplast thylakoid membrane"/>
    <property type="evidence" value="ECO:0007669"/>
    <property type="project" value="UniProtKB-SubCell"/>
</dbReference>
<dbReference type="GO" id="GO:0009512">
    <property type="term" value="C:cytochrome b6f complex"/>
    <property type="evidence" value="ECO:0007669"/>
    <property type="project" value="InterPro"/>
</dbReference>
<dbReference type="GO" id="GO:0045158">
    <property type="term" value="F:electron transporter, transferring electrons within cytochrome b6/f complex of photosystem II activity"/>
    <property type="evidence" value="ECO:0007669"/>
    <property type="project" value="UniProtKB-UniRule"/>
</dbReference>
<dbReference type="GO" id="GO:0015979">
    <property type="term" value="P:photosynthesis"/>
    <property type="evidence" value="ECO:0007669"/>
    <property type="project" value="UniProtKB-KW"/>
</dbReference>
<dbReference type="HAMAP" id="MF_00433">
    <property type="entry name" value="Cytb6_f_PetL"/>
    <property type="match status" value="1"/>
</dbReference>
<dbReference type="InterPro" id="IPR007802">
    <property type="entry name" value="Cyt_b6/f_cplx_su6"/>
</dbReference>
<dbReference type="PANTHER" id="PTHR37266">
    <property type="entry name" value="CYTOCHROME B6-F COMPLEX SUBUNIT 6"/>
    <property type="match status" value="1"/>
</dbReference>
<dbReference type="PANTHER" id="PTHR37266:SF1">
    <property type="entry name" value="CYTOCHROME B6-F COMPLEX SUBUNIT 6"/>
    <property type="match status" value="1"/>
</dbReference>
<dbReference type="Pfam" id="PF05115">
    <property type="entry name" value="PetL"/>
    <property type="match status" value="1"/>
</dbReference>
<name>PETL_AETCO</name>
<accession>A4QJD3</accession>
<organism>
    <name type="scientific">Aethionema cordifolium</name>
    <name type="common">Lebanon stonecress</name>
    <dbReference type="NCBI Taxonomy" id="434059"/>
    <lineage>
        <taxon>Eukaryota</taxon>
        <taxon>Viridiplantae</taxon>
        <taxon>Streptophyta</taxon>
        <taxon>Embryophyta</taxon>
        <taxon>Tracheophyta</taxon>
        <taxon>Spermatophyta</taxon>
        <taxon>Magnoliopsida</taxon>
        <taxon>eudicotyledons</taxon>
        <taxon>Gunneridae</taxon>
        <taxon>Pentapetalae</taxon>
        <taxon>rosids</taxon>
        <taxon>malvids</taxon>
        <taxon>Brassicales</taxon>
        <taxon>Brassicaceae</taxon>
        <taxon>Aethionemeae</taxon>
        <taxon>Aethionema</taxon>
    </lineage>
</organism>
<gene>
    <name evidence="1" type="primary">petL</name>
</gene>
<feature type="chain" id="PRO_0000300131" description="Cytochrome b6-f complex subunit 6">
    <location>
        <begin position="1"/>
        <end position="31"/>
    </location>
</feature>
<feature type="transmembrane region" description="Helical" evidence="1">
    <location>
        <begin position="4"/>
        <end position="26"/>
    </location>
</feature>
<evidence type="ECO:0000255" key="1">
    <source>
        <dbReference type="HAMAP-Rule" id="MF_00433"/>
    </source>
</evidence>
<comment type="function">
    <text evidence="1">Component of the cytochrome b6-f complex, which mediates electron transfer between photosystem II (PSII) and photosystem I (PSI), cyclic electron flow around PSI, and state transitions. PetL is important for photoautotrophic growth as well as for electron transfer efficiency and stability of the cytochrome b6-f complex.</text>
</comment>
<comment type="subunit">
    <text evidence="1">The 4 large subunits of the cytochrome b6-f complex are cytochrome b6, subunit IV (17 kDa polypeptide, PetD), cytochrome f and the Rieske protein, while the 4 small subunits are PetG, PetL, PetM and PetN. The complex functions as a dimer.</text>
</comment>
<comment type="subcellular location">
    <subcellularLocation>
        <location evidence="1">Plastid</location>
        <location evidence="1">Chloroplast thylakoid membrane</location>
        <topology evidence="1">Single-pass membrane protein</topology>
    </subcellularLocation>
</comment>
<comment type="similarity">
    <text evidence="1">Belongs to the PetL family.</text>
</comment>
<keyword id="KW-0150">Chloroplast</keyword>
<keyword id="KW-0249">Electron transport</keyword>
<keyword id="KW-0472">Membrane</keyword>
<keyword id="KW-0602">Photosynthesis</keyword>
<keyword id="KW-0934">Plastid</keyword>
<keyword id="KW-0793">Thylakoid</keyword>
<keyword id="KW-0812">Transmembrane</keyword>
<keyword id="KW-1133">Transmembrane helix</keyword>
<keyword id="KW-0813">Transport</keyword>
<geneLocation type="chloroplast"/>
<reference key="1">
    <citation type="submission" date="2007-03" db="EMBL/GenBank/DDBJ databases">
        <title>Sequencing analysis of Aethionema coridifolium chloroplast DNA.</title>
        <authorList>
            <person name="Hosouchi T."/>
            <person name="Tsuruoka H."/>
            <person name="Kotani H."/>
        </authorList>
    </citation>
    <scope>NUCLEOTIDE SEQUENCE [LARGE SCALE GENOMIC DNA]</scope>
</reference>
<protein>
    <recommendedName>
        <fullName evidence="1">Cytochrome b6-f complex subunit 6</fullName>
    </recommendedName>
    <alternativeName>
        <fullName evidence="1">Cytochrome b6-f complex subunit PetL</fullName>
    </alternativeName>
    <alternativeName>
        <fullName evidence="1">Cytochrome b6-f complex subunit VI</fullName>
    </alternativeName>
</protein>